<dbReference type="SMR" id="P0DMT1"/>
<dbReference type="GO" id="GO:0005576">
    <property type="term" value="C:extracellular region"/>
    <property type="evidence" value="ECO:0007669"/>
    <property type="project" value="UniProtKB-SubCell"/>
</dbReference>
<dbReference type="GO" id="GO:0005509">
    <property type="term" value="F:calcium ion binding"/>
    <property type="evidence" value="ECO:0007669"/>
    <property type="project" value="InterPro"/>
</dbReference>
<dbReference type="GO" id="GO:0047498">
    <property type="term" value="F:calcium-dependent phospholipase A2 activity"/>
    <property type="evidence" value="ECO:0007669"/>
    <property type="project" value="TreeGrafter"/>
</dbReference>
<dbReference type="GO" id="GO:0005543">
    <property type="term" value="F:phospholipid binding"/>
    <property type="evidence" value="ECO:0007669"/>
    <property type="project" value="TreeGrafter"/>
</dbReference>
<dbReference type="GO" id="GO:0090729">
    <property type="term" value="F:toxin activity"/>
    <property type="evidence" value="ECO:0007669"/>
    <property type="project" value="UniProtKB-KW"/>
</dbReference>
<dbReference type="GO" id="GO:0050482">
    <property type="term" value="P:arachidonate secretion"/>
    <property type="evidence" value="ECO:0007669"/>
    <property type="project" value="InterPro"/>
</dbReference>
<dbReference type="GO" id="GO:0016042">
    <property type="term" value="P:lipid catabolic process"/>
    <property type="evidence" value="ECO:0007669"/>
    <property type="project" value="InterPro"/>
</dbReference>
<dbReference type="GO" id="GO:0042130">
    <property type="term" value="P:negative regulation of T cell proliferation"/>
    <property type="evidence" value="ECO:0007669"/>
    <property type="project" value="TreeGrafter"/>
</dbReference>
<dbReference type="GO" id="GO:0006644">
    <property type="term" value="P:phospholipid metabolic process"/>
    <property type="evidence" value="ECO:0007669"/>
    <property type="project" value="InterPro"/>
</dbReference>
<dbReference type="CDD" id="cd00125">
    <property type="entry name" value="PLA2c"/>
    <property type="match status" value="1"/>
</dbReference>
<dbReference type="FunFam" id="1.20.90.10:FF:000001">
    <property type="entry name" value="Basic phospholipase A2 homolog"/>
    <property type="match status" value="1"/>
</dbReference>
<dbReference type="Gene3D" id="1.20.90.10">
    <property type="entry name" value="Phospholipase A2 domain"/>
    <property type="match status" value="1"/>
</dbReference>
<dbReference type="InterPro" id="IPR001211">
    <property type="entry name" value="PLipase_A2"/>
</dbReference>
<dbReference type="InterPro" id="IPR033112">
    <property type="entry name" value="PLipase_A2_Asp_AS"/>
</dbReference>
<dbReference type="InterPro" id="IPR016090">
    <property type="entry name" value="PLipase_A2_dom"/>
</dbReference>
<dbReference type="InterPro" id="IPR036444">
    <property type="entry name" value="PLipase_A2_dom_sf"/>
</dbReference>
<dbReference type="InterPro" id="IPR033113">
    <property type="entry name" value="PLipase_A2_His_AS"/>
</dbReference>
<dbReference type="PANTHER" id="PTHR11716">
    <property type="entry name" value="PHOSPHOLIPASE A2 FAMILY MEMBER"/>
    <property type="match status" value="1"/>
</dbReference>
<dbReference type="PANTHER" id="PTHR11716:SF9">
    <property type="entry name" value="PHOSPHOLIPASE A2, MEMBRANE ASSOCIATED"/>
    <property type="match status" value="1"/>
</dbReference>
<dbReference type="Pfam" id="PF00068">
    <property type="entry name" value="Phospholip_A2_1"/>
    <property type="match status" value="1"/>
</dbReference>
<dbReference type="PRINTS" id="PR00389">
    <property type="entry name" value="PHPHLIPASEA2"/>
</dbReference>
<dbReference type="SMART" id="SM00085">
    <property type="entry name" value="PA2c"/>
    <property type="match status" value="1"/>
</dbReference>
<dbReference type="SUPFAM" id="SSF48619">
    <property type="entry name" value="Phospholipase A2, PLA2"/>
    <property type="match status" value="1"/>
</dbReference>
<dbReference type="PROSITE" id="PS00119">
    <property type="entry name" value="PA2_ASP"/>
    <property type="match status" value="1"/>
</dbReference>
<dbReference type="PROSITE" id="PS00118">
    <property type="entry name" value="PA2_HIS"/>
    <property type="match status" value="1"/>
</dbReference>
<name>PA2HS_ECHPL</name>
<reference key="1">
    <citation type="journal article" date="2013" name="Toxicon">
        <title>Cytotoxic activities of [Ser49]phospholipase A(2) from the venom of the saw-scaled vipers Echis ocellatus, Echis pyramidum leakeyi, Echis carinatus sochureki, and Echis coloratus.</title>
        <authorList>
            <person name="Conlon J.M."/>
            <person name="Attoub S."/>
            <person name="Arafat H."/>
            <person name="Mechkarska M."/>
            <person name="Casewell N.R."/>
            <person name="Harrison R.A."/>
            <person name="Calvete J.J."/>
        </authorList>
    </citation>
    <scope>NUCLEOTIDE SEQUENCE [MRNA]</scope>
    <scope>FUNCTION</scope>
    <scope>MASS SPECTROMETRY</scope>
    <scope>SUBCELLULAR LOCATION</scope>
    <source>
        <tissue>Venom</tissue>
        <tissue>Venom gland</tissue>
    </source>
</reference>
<keyword id="KW-1015">Disulfide bond</keyword>
<keyword id="KW-0959">Myotoxin</keyword>
<keyword id="KW-0964">Secreted</keyword>
<keyword id="KW-0800">Toxin</keyword>
<feature type="chain" id="PRO_0000432596" description="Phospholipase A2 homolog EPL_00195">
    <location>
        <begin position="1"/>
        <end position="121"/>
    </location>
</feature>
<feature type="region of interest" description="Important for membrane-damaging activities in eukaryotes and bacteria; heparin-binding" evidence="1">
    <location>
        <begin position="104"/>
        <end position="116"/>
    </location>
</feature>
<feature type="disulfide bond" evidence="2">
    <location>
        <begin position="25"/>
        <end position="114"/>
    </location>
</feature>
<feature type="disulfide bond" evidence="2">
    <location>
        <begin position="27"/>
        <end position="43"/>
    </location>
</feature>
<feature type="disulfide bond" evidence="2">
    <location>
        <begin position="42"/>
        <end position="94"/>
    </location>
</feature>
<feature type="disulfide bond" evidence="2">
    <location>
        <begin position="48"/>
        <end position="121"/>
    </location>
</feature>
<feature type="disulfide bond" evidence="2">
    <location>
        <begin position="49"/>
        <end position="87"/>
    </location>
</feature>
<feature type="disulfide bond" evidence="2">
    <location>
        <begin position="56"/>
        <end position="80"/>
    </location>
</feature>
<feature type="disulfide bond" evidence="2">
    <location>
        <begin position="74"/>
        <end position="85"/>
    </location>
</feature>
<comment type="function">
    <text evidence="2 3">Snake venom phospholipase A2 homolog that lacks enzymatic activity (By similarity). Shows high myotoxin activities and displays edema-inducing activities (By similarity). Has cytotoxic activities against HUVEC cells (LC(50)=2.5 uL) and human lung adenocarcinoma A549 cells (LC(50)=2.9 uL).</text>
</comment>
<comment type="subunit">
    <text evidence="2">Monomer.</text>
</comment>
<comment type="subcellular location">
    <subcellularLocation>
        <location evidence="3">Secreted</location>
    </subcellularLocation>
</comment>
<comment type="tissue specificity">
    <text evidence="5">Expressed by the venom gland.</text>
</comment>
<comment type="mass spectrometry" mass="13697.0" method="Electrospray" evidence="3"/>
<comment type="miscellaneous">
    <text evidence="3">Negative results: does not show antimicrobial activity against E.coli and S.aureus and does not produce appreciable hemolysis on human erythrocytes.</text>
</comment>
<comment type="similarity">
    <text evidence="5">Belongs to the phospholipase A2 family. Group II subfamily. S49 sub-subfamily.</text>
</comment>
<comment type="caution">
    <text evidence="5">Does not bind calcium as one of the calcium-binding sites is lost (Asp-&gt;Ser in position 47, which corresponds to 'Ser-49' in the current nomenclature).</text>
</comment>
<organism>
    <name type="scientific">Echis pyramidum leakeyi</name>
    <name type="common">Leakey's carpet viper</name>
    <name type="synonym">Echis carinatus leakeyi</name>
    <dbReference type="NCBI Taxonomy" id="38415"/>
    <lineage>
        <taxon>Eukaryota</taxon>
        <taxon>Metazoa</taxon>
        <taxon>Chordata</taxon>
        <taxon>Craniata</taxon>
        <taxon>Vertebrata</taxon>
        <taxon>Euteleostomi</taxon>
        <taxon>Lepidosauria</taxon>
        <taxon>Squamata</taxon>
        <taxon>Bifurcata</taxon>
        <taxon>Unidentata</taxon>
        <taxon>Episquamata</taxon>
        <taxon>Toxicofera</taxon>
        <taxon>Serpentes</taxon>
        <taxon>Colubroidea</taxon>
        <taxon>Viperidae</taxon>
        <taxon>Viperinae</taxon>
        <taxon>Echis</taxon>
    </lineage>
</organism>
<protein>
    <recommendedName>
        <fullName evidence="4">Phospholipase A2 homolog EPL_00195</fullName>
        <shortName>svPLA2 homolog</shortName>
    </recommendedName>
</protein>
<proteinExistence type="evidence at protein level"/>
<sequence length="121" mass="13712">SVIELGKMIIQLTNKTPASYVSYGCFCGGGDKGKPKDATDRCCFVHSCCYDTLPDCSPKTDQYKYKWENGEIICENSTSCKKRICECDKAVAICLRDNLNTYNKKYRIYPNFLCRGDPDKC</sequence>
<evidence type="ECO:0000250" key="1">
    <source>
        <dbReference type="UniProtKB" id="P24605"/>
    </source>
</evidence>
<evidence type="ECO:0000250" key="2">
    <source>
        <dbReference type="UniProtKB" id="P48650"/>
    </source>
</evidence>
<evidence type="ECO:0000269" key="3">
    <source>
    </source>
</evidence>
<evidence type="ECO:0000303" key="4">
    <source>
    </source>
</evidence>
<evidence type="ECO:0000305" key="5"/>
<accession>P0DMT1</accession>